<evidence type="ECO:0000255" key="1">
    <source>
        <dbReference type="HAMAP-Rule" id="MF_00522"/>
    </source>
</evidence>
<accession>A2BVD0</accession>
<protein>
    <recommendedName>
        <fullName evidence="1">Photosystem I reaction center subunit IX</fullName>
    </recommendedName>
</protein>
<keyword id="KW-0472">Membrane</keyword>
<keyword id="KW-0602">Photosynthesis</keyword>
<keyword id="KW-0603">Photosystem I</keyword>
<keyword id="KW-0793">Thylakoid</keyword>
<keyword id="KW-0812">Transmembrane</keyword>
<keyword id="KW-1133">Transmembrane helix</keyword>
<sequence>MFKIFNTKFMRSAPIVAAIWISLTAGIIIEFNRFFPDLLFHPMS</sequence>
<reference key="1">
    <citation type="journal article" date="2007" name="PLoS Genet.">
        <title>Patterns and implications of gene gain and loss in the evolution of Prochlorococcus.</title>
        <authorList>
            <person name="Kettler G.C."/>
            <person name="Martiny A.C."/>
            <person name="Huang K."/>
            <person name="Zucker J."/>
            <person name="Coleman M.L."/>
            <person name="Rodrigue S."/>
            <person name="Chen F."/>
            <person name="Lapidus A."/>
            <person name="Ferriera S."/>
            <person name="Johnson J."/>
            <person name="Steglich C."/>
            <person name="Church G.M."/>
            <person name="Richardson P."/>
            <person name="Chisholm S.W."/>
        </authorList>
    </citation>
    <scope>NUCLEOTIDE SEQUENCE [LARGE SCALE GENOMIC DNA]</scope>
    <source>
        <strain>MIT 9515</strain>
    </source>
</reference>
<organism>
    <name type="scientific">Prochlorococcus marinus (strain MIT 9515)</name>
    <dbReference type="NCBI Taxonomy" id="167542"/>
    <lineage>
        <taxon>Bacteria</taxon>
        <taxon>Bacillati</taxon>
        <taxon>Cyanobacteriota</taxon>
        <taxon>Cyanophyceae</taxon>
        <taxon>Synechococcales</taxon>
        <taxon>Prochlorococcaceae</taxon>
        <taxon>Prochlorococcus</taxon>
    </lineage>
</organism>
<gene>
    <name evidence="1" type="primary">psaJ</name>
    <name type="ordered locus">P9515_05321</name>
</gene>
<proteinExistence type="inferred from homology"/>
<comment type="function">
    <text evidence="1">May help in the organization of the PsaE and PsaF subunits.</text>
</comment>
<comment type="subcellular location">
    <subcellularLocation>
        <location evidence="1">Cellular thylakoid membrane</location>
        <topology evidence="1">Single-pass membrane protein</topology>
    </subcellularLocation>
</comment>
<comment type="similarity">
    <text evidence="1">Belongs to the PsaJ family.</text>
</comment>
<dbReference type="EMBL" id="CP000552">
    <property type="protein sequence ID" value="ABM71741.1"/>
    <property type="molecule type" value="Genomic_DNA"/>
</dbReference>
<dbReference type="RefSeq" id="WP_011819849.1">
    <property type="nucleotide sequence ID" value="NC_008817.1"/>
</dbReference>
<dbReference type="SMR" id="A2BVD0"/>
<dbReference type="STRING" id="167542.P9515_05321"/>
<dbReference type="GeneID" id="60201691"/>
<dbReference type="KEGG" id="pmc:P9515_05321"/>
<dbReference type="eggNOG" id="ENOG5033A5A">
    <property type="taxonomic scope" value="Bacteria"/>
</dbReference>
<dbReference type="HOGENOM" id="CLU_212133_1_1_3"/>
<dbReference type="OrthoDB" id="532702at2"/>
<dbReference type="Proteomes" id="UP000001589">
    <property type="component" value="Chromosome"/>
</dbReference>
<dbReference type="GO" id="GO:0009522">
    <property type="term" value="C:photosystem I"/>
    <property type="evidence" value="ECO:0007669"/>
    <property type="project" value="UniProtKB-KW"/>
</dbReference>
<dbReference type="GO" id="GO:0031676">
    <property type="term" value="C:plasma membrane-derived thylakoid membrane"/>
    <property type="evidence" value="ECO:0007669"/>
    <property type="project" value="UniProtKB-SubCell"/>
</dbReference>
<dbReference type="GO" id="GO:0015979">
    <property type="term" value="P:photosynthesis"/>
    <property type="evidence" value="ECO:0007669"/>
    <property type="project" value="UniProtKB-UniRule"/>
</dbReference>
<dbReference type="Gene3D" id="1.20.5.510">
    <property type="entry name" value="Single helix bin"/>
    <property type="match status" value="1"/>
</dbReference>
<dbReference type="HAMAP" id="MF_00522">
    <property type="entry name" value="PSI_PsaJ"/>
    <property type="match status" value="1"/>
</dbReference>
<dbReference type="InterPro" id="IPR002615">
    <property type="entry name" value="PSI_PsaJ"/>
</dbReference>
<dbReference type="InterPro" id="IPR036062">
    <property type="entry name" value="PSI_PsaJ_sf"/>
</dbReference>
<dbReference type="NCBIfam" id="NF002743">
    <property type="entry name" value="PRK02733.1"/>
    <property type="match status" value="1"/>
</dbReference>
<dbReference type="PANTHER" id="PTHR36082">
    <property type="match status" value="1"/>
</dbReference>
<dbReference type="PANTHER" id="PTHR36082:SF2">
    <property type="entry name" value="PHOTOSYSTEM I REACTION CENTER SUBUNIT IX"/>
    <property type="match status" value="1"/>
</dbReference>
<dbReference type="Pfam" id="PF01701">
    <property type="entry name" value="PSI_PsaJ"/>
    <property type="match status" value="1"/>
</dbReference>
<dbReference type="SUPFAM" id="SSF81544">
    <property type="entry name" value="Subunit IX of photosystem I reaction centre, PsaJ"/>
    <property type="match status" value="1"/>
</dbReference>
<name>PSAJ_PROM5</name>
<feature type="chain" id="PRO_1000050919" description="Photosystem I reaction center subunit IX">
    <location>
        <begin position="1"/>
        <end position="44"/>
    </location>
</feature>
<feature type="transmembrane region" description="Helical" evidence="1">
    <location>
        <begin position="9"/>
        <end position="29"/>
    </location>
</feature>